<comment type="function">
    <text evidence="1 4">Receptor for MSH (alpha, beta and gamma) and ACTH (By similarity). The activity of this receptor is mediated by G proteins which activate adenylate cyclase (By similarity). Mediates melanogenesis, the production of eumelanin (black/brown) and phaeomelanin (red/yellow), via regulation of cAMP signaling in melanocytes (PubMed:9799269).</text>
</comment>
<comment type="subunit">
    <text evidence="1">Interacts with MGRN1, but does not undergo MGRN1-mediated ubiquitination; this interaction competes with GNAS-binding and thus inhibits agonist-induced cAMP production. Interacts with OPN3; the interaction results in a decrease in MC1R-mediated cAMP signaling and ultimately a decrease in melanin production in melanocytes.</text>
</comment>
<comment type="subcellular location">
    <subcellularLocation>
        <location evidence="1">Cell membrane</location>
        <topology evidence="2">Multi-pass membrane protein</topology>
    </subcellularLocation>
</comment>
<comment type="polymorphism">
    <text evidence="4">Variation is correlated with coat color. MC1R*2 is associated with the black color of European large black and Chinese meishan pigs. MC1R*3 is associated with the black color in the hampshire breed. MC1R*4 is found in recessive red animals.</text>
</comment>
<comment type="similarity">
    <text evidence="3">Belongs to the G-protein coupled receptor 1 family.</text>
</comment>
<sequence length="320" mass="34592">MPVLGPERRLLASLSSAPPAAPRLGLAANQTNQTGPQCLEVSIPDGLFLSLGLVSLVENVLVVAAIAKNRNLHSPMYYFVCCLAVSDLLVSVSNVLETAVLLLLEAGALAAQAAVVQQLDNVMDVLICGSMVSSLCFLGAIAVDRYVSIFYALRYHSIVTLPRAGRAIAAIWAGSVLSSTLFIAYYHHTAVLLGLVSFFVAMLALMAVLYVHMLARACQHGRHIARLHKTQHPTRQGCGLKGAATLTILLGVFLLCWAPFFLHLSLVVLCPQHPTCGCVFKNVNLFLALVICNSIVDPLIYAFRSQELRKTLQEVLQCSW</sequence>
<proteinExistence type="inferred from homology"/>
<name>MSHR_PIG</name>
<feature type="chain" id="PRO_0000069840" description="Melanocyte-stimulating hormone receptor">
    <location>
        <begin position="1"/>
        <end position="320"/>
    </location>
</feature>
<feature type="topological domain" description="Extracellular" evidence="2">
    <location>
        <begin position="1"/>
        <end position="40"/>
    </location>
</feature>
<feature type="transmembrane region" description="Helical; Name=1" evidence="2">
    <location>
        <begin position="41"/>
        <end position="66"/>
    </location>
</feature>
<feature type="topological domain" description="Cytoplasmic" evidence="2">
    <location>
        <begin position="67"/>
        <end position="75"/>
    </location>
</feature>
<feature type="transmembrane region" description="Helical; Name=2" evidence="2">
    <location>
        <begin position="76"/>
        <end position="96"/>
    </location>
</feature>
<feature type="topological domain" description="Extracellular" evidence="2">
    <location>
        <begin position="97"/>
        <end position="121"/>
    </location>
</feature>
<feature type="transmembrane region" description="Helical; Name=3" evidence="2">
    <location>
        <begin position="122"/>
        <end position="143"/>
    </location>
</feature>
<feature type="topological domain" description="Cytoplasmic" evidence="2">
    <location>
        <begin position="144"/>
        <end position="166"/>
    </location>
</feature>
<feature type="transmembrane region" description="Helical; Name=4" evidence="2">
    <location>
        <begin position="167"/>
        <end position="186"/>
    </location>
</feature>
<feature type="topological domain" description="Extracellular" evidence="2">
    <location>
        <begin position="187"/>
        <end position="194"/>
    </location>
</feature>
<feature type="transmembrane region" description="Helical; Name=5" evidence="2">
    <location>
        <begin position="195"/>
        <end position="214"/>
    </location>
</feature>
<feature type="topological domain" description="Cytoplasmic" evidence="2">
    <location>
        <begin position="215"/>
        <end position="243"/>
    </location>
</feature>
<feature type="transmembrane region" description="Helical; Name=6" evidence="2">
    <location>
        <begin position="244"/>
        <end position="269"/>
    </location>
</feature>
<feature type="topological domain" description="Extracellular" evidence="2">
    <location>
        <begin position="270"/>
        <end position="282"/>
    </location>
</feature>
<feature type="transmembrane region" description="Helical; Name=7" evidence="2">
    <location>
        <begin position="283"/>
        <end position="303"/>
    </location>
</feature>
<feature type="topological domain" description="Cytoplasmic" evidence="2">
    <location>
        <begin position="304"/>
        <end position="320"/>
    </location>
</feature>
<feature type="glycosylation site" description="N-linked (GlcNAc...) asparagine" evidence="2">
    <location>
        <position position="32"/>
    </location>
</feature>
<feature type="sequence variant" description="In allele MC1R*2 and strain Jeju native black." evidence="5 6">
    <original>V</original>
    <variation>M</variation>
    <location>
        <position position="95"/>
    </location>
</feature>
<feature type="sequence variant" description="In allele MC1R*2 and strain Jeju native black; may form a constitutively active receptor." evidence="5">
    <original>L</original>
    <variation>P</variation>
    <location>
        <position position="102"/>
    </location>
</feature>
<feature type="sequence variant" description="In allele MC1R*3.">
    <original>D</original>
    <variation>N</variation>
    <location>
        <position position="124"/>
    </location>
</feature>
<feature type="sequence variant" description="In allele MC1R*4." evidence="6">
    <original>A</original>
    <variation>V</variation>
    <location>
        <position position="164"/>
    </location>
</feature>
<feature type="sequence variant" description="In strain: Jeju native black." evidence="5">
    <original>L</original>
    <variation>M</variation>
    <location>
        <position position="192"/>
    </location>
</feature>
<feature type="sequence variant" description="In strain: Jeju native black." evidence="5">
    <original>M</original>
    <variation>V</variation>
    <location>
        <position position="213"/>
    </location>
</feature>
<feature type="sequence variant" description="In allele MC1R*4." evidence="6">
    <original>A</original>
    <variation>T</variation>
    <location>
        <position position="243"/>
    </location>
</feature>
<evidence type="ECO:0000250" key="1">
    <source>
        <dbReference type="UniProtKB" id="Q01726"/>
    </source>
</evidence>
<evidence type="ECO:0000255" key="2"/>
<evidence type="ECO:0000255" key="3">
    <source>
        <dbReference type="PROSITE-ProRule" id="PRU00521"/>
    </source>
</evidence>
<evidence type="ECO:0000269" key="4">
    <source>
    </source>
</evidence>
<evidence type="ECO:0000269" key="5">
    <source ref="1"/>
</evidence>
<evidence type="ECO:0000269" key="6">
    <source ref="2"/>
</evidence>
<keyword id="KW-1003">Cell membrane</keyword>
<keyword id="KW-0297">G-protein coupled receptor</keyword>
<keyword id="KW-0325">Glycoprotein</keyword>
<keyword id="KW-0472">Membrane</keyword>
<keyword id="KW-0675">Receptor</keyword>
<keyword id="KW-1185">Reference proteome</keyword>
<keyword id="KW-0807">Transducer</keyword>
<keyword id="KW-0812">Transmembrane</keyword>
<keyword id="KW-1133">Transmembrane helix</keyword>
<protein>
    <recommendedName>
        <fullName>Melanocyte-stimulating hormone receptor</fullName>
        <shortName>MSH-R</shortName>
    </recommendedName>
    <alternativeName>
        <fullName>Melanocortin receptor 1</fullName>
        <shortName>MC1-R</shortName>
    </alternativeName>
</protein>
<reference key="1">
    <citation type="submission" date="2004-01" db="EMBL/GenBank/DDBJ databases">
        <title>The complete sequence of pig (Sus scrofa) MC1R gene.</title>
        <authorList>
            <person name="Cho I.C."/>
            <person name="Jung J.K."/>
            <person name="Jung Y.H."/>
            <person name="Jeon J.T."/>
        </authorList>
    </citation>
    <scope>NUCLEOTIDE SEQUENCE [GENOMIC DNA]</scope>
    <scope>VARIANTS MET-95; PRO-102; MET-192 AND VAL-213</scope>
    <source>
        <strain>Jeju native black</strain>
        <tissue>Blood</tissue>
    </source>
</reference>
<reference key="2">
    <citation type="submission" date="2005-02" db="EMBL/GenBank/DDBJ databases">
        <title>Single nucleotide polymorphisms (SNPs) analysis on the extension (MC1R), the white (KIT) and the agouti (ASIP) loci and their association with coat color phenotypes of pigs.</title>
        <authorList>
            <person name="Shi K."/>
            <person name="Wang A."/>
            <person name="Li N."/>
        </authorList>
    </citation>
    <scope>NUCLEOTIDE SEQUENCE [GENOMIC DNA]</scope>
    <scope>VARIANTS MET-95; VAL-164 AND THR-243</scope>
</reference>
<reference key="3">
    <citation type="journal article" date="1998" name="Genetics">
        <title>Melanocortin receptor 1 (MC1R) mutations and coat color in pigs.</title>
        <authorList>
            <person name="Kijas J.M.H."/>
            <person name="Wales R."/>
            <person name="Tornsten A."/>
            <person name="Chardon P."/>
            <person name="Moller M."/>
            <person name="Andersson L."/>
        </authorList>
    </citation>
    <scope>NUCLEOTIDE SEQUENCE [GENOMIC DNA] OF 31-313</scope>
    <scope>FUNCTION</scope>
    <scope>VARIANTS MC1R*1; MC1R*2; MC1R*3 AND MC1R*4</scope>
</reference>
<organism>
    <name type="scientific">Sus scrofa</name>
    <name type="common">Pig</name>
    <dbReference type="NCBI Taxonomy" id="9823"/>
    <lineage>
        <taxon>Eukaryota</taxon>
        <taxon>Metazoa</taxon>
        <taxon>Chordata</taxon>
        <taxon>Craniata</taxon>
        <taxon>Vertebrata</taxon>
        <taxon>Euteleostomi</taxon>
        <taxon>Mammalia</taxon>
        <taxon>Eutheria</taxon>
        <taxon>Laurasiatheria</taxon>
        <taxon>Artiodactyla</taxon>
        <taxon>Suina</taxon>
        <taxon>Suidae</taxon>
        <taxon>Sus</taxon>
    </lineage>
</organism>
<accession>Q9TU05</accession>
<accession>Q2M499</accession>
<accession>Q2M4A0</accession>
<accession>Q2M4A3</accession>
<accession>Q6QZW6</accession>
<accession>Q9TV86</accession>
<accession>Q9TV87</accession>
<accession>Q9TV88</accession>
<accession>Q9XS81</accession>
<gene>
    <name type="primary">MC1R</name>
</gene>
<dbReference type="EMBL" id="AY520823">
    <property type="protein sequence ID" value="AAS17973.1"/>
    <property type="molecule type" value="Genomic_DNA"/>
</dbReference>
<dbReference type="EMBL" id="AF181964">
    <property type="protein sequence ID" value="AAD53963.1"/>
    <property type="status" value="ALT_SEQ"/>
    <property type="molecule type" value="Genomic_DNA"/>
</dbReference>
<dbReference type="EMBL" id="AY916520">
    <property type="protein sequence ID" value="AAX18256.1"/>
    <property type="molecule type" value="Genomic_DNA"/>
</dbReference>
<dbReference type="EMBL" id="AY916523">
    <property type="protein sequence ID" value="AAX18259.1"/>
    <property type="molecule type" value="Genomic_DNA"/>
</dbReference>
<dbReference type="EMBL" id="AY916524">
    <property type="protein sequence ID" value="AAX18260.1"/>
    <property type="molecule type" value="Genomic_DNA"/>
</dbReference>
<dbReference type="EMBL" id="AF082487">
    <property type="protein sequence ID" value="AAD14569.1"/>
    <property type="molecule type" value="Genomic_DNA"/>
</dbReference>
<dbReference type="EMBL" id="AF082488">
    <property type="protein sequence ID" value="AAD14570.1"/>
    <property type="molecule type" value="Genomic_DNA"/>
</dbReference>
<dbReference type="EMBL" id="AF082489">
    <property type="protein sequence ID" value="AAD14571.1"/>
    <property type="molecule type" value="Genomic_DNA"/>
</dbReference>
<dbReference type="EMBL" id="AF082490">
    <property type="protein sequence ID" value="AAD14572.1"/>
    <property type="molecule type" value="Genomic_DNA"/>
</dbReference>
<dbReference type="RefSeq" id="NP_001008690.1">
    <property type="nucleotide sequence ID" value="NM_001008690.1"/>
</dbReference>
<dbReference type="SMR" id="Q9TU05"/>
<dbReference type="FunCoup" id="Q9TU05">
    <property type="interactions" value="166"/>
</dbReference>
<dbReference type="STRING" id="9823.ENSSSCP00000027395"/>
<dbReference type="GlyCosmos" id="Q9TU05">
    <property type="glycosylation" value="1 site, No reported glycans"/>
</dbReference>
<dbReference type="GlyGen" id="Q9TU05">
    <property type="glycosylation" value="1 site"/>
</dbReference>
<dbReference type="PaxDb" id="9823-ENSSSCP00000027395"/>
<dbReference type="Ensembl" id="ENSSSCT00115033229">
    <property type="protein sequence ID" value="ENSSSCP00115031560"/>
    <property type="gene ID" value="ENSSSCG00115018774"/>
</dbReference>
<dbReference type="GeneID" id="494018"/>
<dbReference type="KEGG" id="ssc:494018"/>
<dbReference type="CTD" id="4157"/>
<dbReference type="eggNOG" id="KOG3656">
    <property type="taxonomic scope" value="Eukaryota"/>
</dbReference>
<dbReference type="InParanoid" id="Q9TU05"/>
<dbReference type="OrthoDB" id="5970330at2759"/>
<dbReference type="Proteomes" id="UP000008227">
    <property type="component" value="Unplaced"/>
</dbReference>
<dbReference type="Proteomes" id="UP000314985">
    <property type="component" value="Unplaced"/>
</dbReference>
<dbReference type="Proteomes" id="UP000694570">
    <property type="component" value="Unplaced"/>
</dbReference>
<dbReference type="Proteomes" id="UP000694571">
    <property type="component" value="Unplaced"/>
</dbReference>
<dbReference type="Proteomes" id="UP000694720">
    <property type="component" value="Unplaced"/>
</dbReference>
<dbReference type="Proteomes" id="UP000694722">
    <property type="component" value="Unplaced"/>
</dbReference>
<dbReference type="Proteomes" id="UP000694723">
    <property type="component" value="Unplaced"/>
</dbReference>
<dbReference type="Proteomes" id="UP000694724">
    <property type="component" value="Unplaced"/>
</dbReference>
<dbReference type="Proteomes" id="UP000694725">
    <property type="component" value="Unplaced"/>
</dbReference>
<dbReference type="Proteomes" id="UP000694726">
    <property type="component" value="Unplaced"/>
</dbReference>
<dbReference type="Proteomes" id="UP000694727">
    <property type="component" value="Unplaced"/>
</dbReference>
<dbReference type="Proteomes" id="UP000694728">
    <property type="component" value="Unplaced"/>
</dbReference>
<dbReference type="GO" id="GO:0005737">
    <property type="term" value="C:cytoplasm"/>
    <property type="evidence" value="ECO:0000318"/>
    <property type="project" value="GO_Central"/>
</dbReference>
<dbReference type="GO" id="GO:0005886">
    <property type="term" value="C:plasma membrane"/>
    <property type="evidence" value="ECO:0000250"/>
    <property type="project" value="UniProtKB"/>
</dbReference>
<dbReference type="GO" id="GO:0004980">
    <property type="term" value="F:melanocyte-stimulating hormone receptor activity"/>
    <property type="evidence" value="ECO:0000318"/>
    <property type="project" value="GO_Central"/>
</dbReference>
<dbReference type="GO" id="GO:0007189">
    <property type="term" value="P:adenylate cyclase-activating G protein-coupled receptor signaling pathway"/>
    <property type="evidence" value="ECO:0000318"/>
    <property type="project" value="GO_Central"/>
</dbReference>
<dbReference type="GO" id="GO:0019222">
    <property type="term" value="P:regulation of metabolic process"/>
    <property type="evidence" value="ECO:0000318"/>
    <property type="project" value="GO_Central"/>
</dbReference>
<dbReference type="FunFam" id="1.20.1070.10:FF:000211">
    <property type="entry name" value="Melanocyte-stimulating hormone receptor"/>
    <property type="match status" value="1"/>
</dbReference>
<dbReference type="Gene3D" id="1.20.1070.10">
    <property type="entry name" value="Rhodopsin 7-helix transmembrane proteins"/>
    <property type="match status" value="1"/>
</dbReference>
<dbReference type="InterPro" id="IPR000276">
    <property type="entry name" value="GPCR_Rhodpsn"/>
</dbReference>
<dbReference type="InterPro" id="IPR017452">
    <property type="entry name" value="GPCR_Rhodpsn_7TM"/>
</dbReference>
<dbReference type="InterPro" id="IPR001671">
    <property type="entry name" value="Melcrt_ACTH_rcpt"/>
</dbReference>
<dbReference type="InterPro" id="IPR000761">
    <property type="entry name" value="MSH_rcpt"/>
</dbReference>
<dbReference type="PANTHER" id="PTHR22750">
    <property type="entry name" value="G-PROTEIN COUPLED RECEPTOR"/>
    <property type="match status" value="1"/>
</dbReference>
<dbReference type="Pfam" id="PF00001">
    <property type="entry name" value="7tm_1"/>
    <property type="match status" value="2"/>
</dbReference>
<dbReference type="PRINTS" id="PR00237">
    <property type="entry name" value="GPCRRHODOPSN"/>
</dbReference>
<dbReference type="PRINTS" id="PR00534">
    <property type="entry name" value="MCRFAMILY"/>
</dbReference>
<dbReference type="PRINTS" id="PR00536">
    <property type="entry name" value="MELNOCYTESHR"/>
</dbReference>
<dbReference type="SMART" id="SM01381">
    <property type="entry name" value="7TM_GPCR_Srsx"/>
    <property type="match status" value="1"/>
</dbReference>
<dbReference type="SUPFAM" id="SSF81321">
    <property type="entry name" value="Family A G protein-coupled receptor-like"/>
    <property type="match status" value="1"/>
</dbReference>
<dbReference type="PROSITE" id="PS00237">
    <property type="entry name" value="G_PROTEIN_RECEP_F1_1"/>
    <property type="match status" value="1"/>
</dbReference>
<dbReference type="PROSITE" id="PS50262">
    <property type="entry name" value="G_PROTEIN_RECEP_F1_2"/>
    <property type="match status" value="1"/>
</dbReference>